<dbReference type="EMBL" id="AJ426430">
    <property type="protein sequence ID" value="CAD19994.1"/>
    <property type="molecule type" value="mRNA"/>
</dbReference>
<dbReference type="RefSeq" id="NP_001272253.1">
    <property type="nucleotide sequence ID" value="NM_001285324.1"/>
</dbReference>
<dbReference type="RefSeq" id="XP_045220623.1">
    <property type="nucleotide sequence ID" value="XM_045364688.2"/>
</dbReference>
<dbReference type="SMR" id="Q8MI05"/>
<dbReference type="STRING" id="9541.ENSMFAP00000011005"/>
<dbReference type="GlyCosmos" id="Q8MI05">
    <property type="glycosylation" value="4 sites, No reported glycans"/>
</dbReference>
<dbReference type="Ensembl" id="ENSMFAT00000045749.2">
    <property type="protein sequence ID" value="ENSMFAP00000011005.1"/>
    <property type="gene ID" value="ENSMFAG00000012038.2"/>
</dbReference>
<dbReference type="GeneID" id="102141941"/>
<dbReference type="VEuPathDB" id="HostDB:ENSMFAG00000012038"/>
<dbReference type="eggNOG" id="KOG4297">
    <property type="taxonomic scope" value="Eukaryota"/>
</dbReference>
<dbReference type="GeneTree" id="ENSGT00940000163227"/>
<dbReference type="Proteomes" id="UP000233100">
    <property type="component" value="Chromosome 11"/>
</dbReference>
<dbReference type="Bgee" id="ENSMFAG00000012038">
    <property type="expression patterns" value="Expressed in spleen and 8 other cell types or tissues"/>
</dbReference>
<dbReference type="GO" id="GO:0005886">
    <property type="term" value="C:plasma membrane"/>
    <property type="evidence" value="ECO:0007669"/>
    <property type="project" value="TreeGrafter"/>
</dbReference>
<dbReference type="GO" id="GO:0030246">
    <property type="term" value="F:carbohydrate binding"/>
    <property type="evidence" value="ECO:0007669"/>
    <property type="project" value="UniProtKB-KW"/>
</dbReference>
<dbReference type="GO" id="GO:0004888">
    <property type="term" value="F:transmembrane signaling receptor activity"/>
    <property type="evidence" value="ECO:0007669"/>
    <property type="project" value="Ensembl"/>
</dbReference>
<dbReference type="GO" id="GO:0045087">
    <property type="term" value="P:innate immune response"/>
    <property type="evidence" value="ECO:0007669"/>
    <property type="project" value="UniProtKB-KW"/>
</dbReference>
<dbReference type="GO" id="GO:0051132">
    <property type="term" value="P:NK T cell activation"/>
    <property type="evidence" value="ECO:0007669"/>
    <property type="project" value="Ensembl"/>
</dbReference>
<dbReference type="CDD" id="cd03593">
    <property type="entry name" value="CLECT_NK_receptors_like"/>
    <property type="match status" value="1"/>
</dbReference>
<dbReference type="FunFam" id="3.10.100.10:FF:000080">
    <property type="entry name" value="Killer cell lectin-like receptor subfamily F member 1"/>
    <property type="match status" value="1"/>
</dbReference>
<dbReference type="Gene3D" id="3.10.100.10">
    <property type="entry name" value="Mannose-Binding Protein A, subunit A"/>
    <property type="match status" value="1"/>
</dbReference>
<dbReference type="InterPro" id="IPR001304">
    <property type="entry name" value="C-type_lectin-like"/>
</dbReference>
<dbReference type="InterPro" id="IPR016186">
    <property type="entry name" value="C-type_lectin-like/link_sf"/>
</dbReference>
<dbReference type="InterPro" id="IPR051379">
    <property type="entry name" value="C-type_Lectin_Receptor_IMM"/>
</dbReference>
<dbReference type="InterPro" id="IPR016187">
    <property type="entry name" value="CTDL_fold"/>
</dbReference>
<dbReference type="InterPro" id="IPR033992">
    <property type="entry name" value="NKR-like_CTLD"/>
</dbReference>
<dbReference type="PANTHER" id="PTHR46746:SF7">
    <property type="entry name" value="KILLER CELL LECTIN-LIKE RECEPTOR SUBFAMILY F MEMBER 1"/>
    <property type="match status" value="1"/>
</dbReference>
<dbReference type="PANTHER" id="PTHR46746">
    <property type="entry name" value="KILLER CELL LECTIN-LIKE RECEPTOR SUBFAMILY F MEMBER 2"/>
    <property type="match status" value="1"/>
</dbReference>
<dbReference type="Pfam" id="PF00059">
    <property type="entry name" value="Lectin_C"/>
    <property type="match status" value="1"/>
</dbReference>
<dbReference type="SMART" id="SM00034">
    <property type="entry name" value="CLECT"/>
    <property type="match status" value="1"/>
</dbReference>
<dbReference type="SUPFAM" id="SSF56436">
    <property type="entry name" value="C-type lectin-like"/>
    <property type="match status" value="1"/>
</dbReference>
<dbReference type="PROSITE" id="PS50041">
    <property type="entry name" value="C_TYPE_LECTIN_2"/>
    <property type="match status" value="1"/>
</dbReference>
<comment type="function">
    <text evidence="1">Functions as an activating receptor involved in immunosurveillance upon binding to various ligands displayed at the surface of myeloid cells. Upon interaction with CLEC2B ligand, stimulates NK-cell cytotoxicity and cytokine production leading to the cytolysis of malignant CLEC2B-expressing myeloid cells. Actviation of the common cytotoxicity pathway involves SRC and SYK kinases.</text>
</comment>
<comment type="subunit">
    <text evidence="1">Homodimer. Interacts with CLEC2B.</text>
</comment>
<comment type="subcellular location">
    <subcellularLocation>
        <location evidence="4">Membrane</location>
        <topology evidence="4">Single-pass type II membrane protein</topology>
    </subcellularLocation>
</comment>
<comment type="PTM">
    <text evidence="1">Phosphorylated on Tyr-7; this phosphorylation is required for NKp80/KLRF1-mediated cytotoxicity.</text>
</comment>
<gene>
    <name type="primary">KLRF1</name>
</gene>
<proteinExistence type="evidence at transcript level"/>
<organism>
    <name type="scientific">Macaca fascicularis</name>
    <name type="common">Crab-eating macaque</name>
    <name type="synonym">Cynomolgus monkey</name>
    <dbReference type="NCBI Taxonomy" id="9541"/>
    <lineage>
        <taxon>Eukaryota</taxon>
        <taxon>Metazoa</taxon>
        <taxon>Chordata</taxon>
        <taxon>Craniata</taxon>
        <taxon>Vertebrata</taxon>
        <taxon>Euteleostomi</taxon>
        <taxon>Mammalia</taxon>
        <taxon>Eutheria</taxon>
        <taxon>Euarchontoglires</taxon>
        <taxon>Primates</taxon>
        <taxon>Haplorrhini</taxon>
        <taxon>Catarrhini</taxon>
        <taxon>Cercopithecidae</taxon>
        <taxon>Cercopithecinae</taxon>
        <taxon>Macaca</taxon>
    </lineage>
</organism>
<sequence>MQDEERYMTLNVQSKKRTSTQTTQLTFKDYSVVLHWYKILLGISGTLNGILALALISLILLVSQGVLLKCQKGSHSNTTEHEDIGDLKMNNGTRRNTSNKDLCVSRSADQTVLCQSEWLKYRGKCYWFSNEMKSWSDSYVYCLERKSHLLIIQDELEMAFIQKNLRQSNYVWMGLNFTSLKMTWTWVDGSPLDPKIFFIKGPAKENSCAAIKESKIYSETCSSVFKWICQY</sequence>
<keyword id="KW-1015">Disulfide bond</keyword>
<keyword id="KW-0325">Glycoprotein</keyword>
<keyword id="KW-0391">Immunity</keyword>
<keyword id="KW-0399">Innate immunity</keyword>
<keyword id="KW-0430">Lectin</keyword>
<keyword id="KW-0472">Membrane</keyword>
<keyword id="KW-0597">Phosphoprotein</keyword>
<keyword id="KW-0675">Receptor</keyword>
<keyword id="KW-1185">Reference proteome</keyword>
<keyword id="KW-0735">Signal-anchor</keyword>
<keyword id="KW-0812">Transmembrane</keyword>
<keyword id="KW-1133">Transmembrane helix</keyword>
<accession>Q8MI05</accession>
<feature type="chain" id="PRO_0000046592" description="Killer cell lectin-like receptor subfamily F member 1">
    <location>
        <begin position="1"/>
        <end position="231"/>
    </location>
</feature>
<feature type="topological domain" description="Cytoplasmic" evidence="2">
    <location>
        <begin position="1"/>
        <end position="38"/>
    </location>
</feature>
<feature type="transmembrane region" description="Helical; Signal-anchor for type II membrane protein" evidence="2">
    <location>
        <begin position="39"/>
        <end position="59"/>
    </location>
</feature>
<feature type="topological domain" description="Extracellular" evidence="2">
    <location>
        <begin position="60"/>
        <end position="231"/>
    </location>
</feature>
<feature type="domain" description="C-type lectin" evidence="3">
    <location>
        <begin position="121"/>
        <end position="230"/>
    </location>
</feature>
<feature type="modified residue" description="Phosphotyrosine" evidence="1">
    <location>
        <position position="7"/>
    </location>
</feature>
<feature type="glycosylation site" description="N-linked (GlcNAc...) asparagine" evidence="2">
    <location>
        <position position="77"/>
    </location>
</feature>
<feature type="glycosylation site" description="N-linked (GlcNAc...) asparagine" evidence="2">
    <location>
        <position position="91"/>
    </location>
</feature>
<feature type="glycosylation site" description="N-linked (GlcNAc...) asparagine" evidence="2">
    <location>
        <position position="96"/>
    </location>
</feature>
<feature type="glycosylation site" description="N-linked (GlcNAc...) asparagine" evidence="2">
    <location>
        <position position="176"/>
    </location>
</feature>
<feature type="disulfide bond" evidence="3">
    <location>
        <begin position="142"/>
        <end position="229"/>
    </location>
</feature>
<feature type="disulfide bond" evidence="3">
    <location>
        <begin position="208"/>
        <end position="221"/>
    </location>
</feature>
<name>KLRF1_MACFA</name>
<reference key="1">
    <citation type="submission" date="2001-12" db="EMBL/GenBank/DDBJ databases">
        <title>Macaca fascicularis NK cell and receptors.</title>
        <authorList>
            <person name="Biassoni R."/>
        </authorList>
    </citation>
    <scope>NUCLEOTIDE SEQUENCE [MRNA]</scope>
    <source>
        <tissue>Natural killer cell</tissue>
    </source>
</reference>
<evidence type="ECO:0000250" key="1">
    <source>
        <dbReference type="UniProtKB" id="Q9NZS2"/>
    </source>
</evidence>
<evidence type="ECO:0000255" key="2"/>
<evidence type="ECO:0000255" key="3">
    <source>
        <dbReference type="PROSITE-ProRule" id="PRU00040"/>
    </source>
</evidence>
<evidence type="ECO:0000305" key="4"/>
<protein>
    <recommendedName>
        <fullName>Killer cell lectin-like receptor subfamily F member 1</fullName>
        <shortName>Lectin-like receptor F1</shortName>
    </recommendedName>
    <alternativeName>
        <fullName>Activating coreceptor NKp80</fullName>
    </alternativeName>
</protein>